<name>Y9129_PARXL</name>
<proteinExistence type="predicted"/>
<reference key="1">
    <citation type="journal article" date="1992" name="J. Bacteriol.">
        <title>Nucleotide sequencing and transcriptional mapping of the genes encoding biphenyl dioxygenase, a multicomponent polychlorinated-biphenyl-degrading enzyme in Pseudomonas strain LB400.</title>
        <authorList>
            <person name="Erickson B.D."/>
            <person name="Mondello F.J."/>
        </authorList>
    </citation>
    <scope>NUCLEOTIDE SEQUENCE [GENOMIC DNA]</scope>
</reference>
<reference key="2">
    <citation type="journal article" date="2006" name="Proc. Natl. Acad. Sci. U.S.A.">
        <title>Burkholderia xenovorans LB400 harbors a multi-replicon, 9.73-Mbp genome shaped for versatility.</title>
        <authorList>
            <person name="Chain P.S.G."/>
            <person name="Denef V.J."/>
            <person name="Konstantinidis K.T."/>
            <person name="Vergez L.M."/>
            <person name="Agullo L."/>
            <person name="Reyes V.L."/>
            <person name="Hauser L."/>
            <person name="Cordova M."/>
            <person name="Gomez L."/>
            <person name="Gonzalez M."/>
            <person name="Land M."/>
            <person name="Lao V."/>
            <person name="Larimer F."/>
            <person name="LiPuma J.J."/>
            <person name="Mahenthiralingam E."/>
            <person name="Malfatti S.A."/>
            <person name="Marx C.J."/>
            <person name="Parnell J.J."/>
            <person name="Ramette A."/>
            <person name="Richardson P."/>
            <person name="Seeger M."/>
            <person name="Smith D."/>
            <person name="Spilker T."/>
            <person name="Sul W.J."/>
            <person name="Tsoi T.V."/>
            <person name="Ulrich L.E."/>
            <person name="Zhulin I.B."/>
            <person name="Tiedje J.M."/>
        </authorList>
    </citation>
    <scope>NUCLEOTIDE SEQUENCE [LARGE SCALE GENOMIC DNA]</scope>
    <source>
        <strain>LB400</strain>
    </source>
</reference>
<sequence>MKNARLFLIAIGVFYIINLIGTLPFSTLGLFGRMYPGVELHVGAPIFTLLQDAWAVVGLQLGAIGAVALWGARDPGRYRAVIPVVIATEVVDGLWDFYSIVWSHEALWFGLVTLVIHVLWIGWGLHAWRALASKSLRTL</sequence>
<protein>
    <recommendedName>
        <fullName>Uncharacterized BphX-like protein Bxeno_C1129</fullName>
    </recommendedName>
</protein>
<keyword id="KW-1185">Reference proteome</keyword>
<feature type="chain" id="PRO_0000248938" description="Uncharacterized BphX-like protein Bxeno_C1129">
    <location>
        <begin position="1"/>
        <end position="139"/>
    </location>
</feature>
<dbReference type="EMBL" id="M86348">
    <property type="protein sequence ID" value="AAB63427.1"/>
    <property type="molecule type" value="Genomic_DNA"/>
</dbReference>
<dbReference type="EMBL" id="CP000272">
    <property type="protein sequence ID" value="ABE37057.1"/>
    <property type="molecule type" value="Genomic_DNA"/>
</dbReference>
<dbReference type="RefSeq" id="WP_003451002.1">
    <property type="nucleotide sequence ID" value="NZ_CP008761.1"/>
</dbReference>
<dbReference type="SMR" id="P0C1T3"/>
<dbReference type="STRING" id="266265.Bxe_C1195"/>
<dbReference type="KEGG" id="bxb:DR64_8610"/>
<dbReference type="KEGG" id="bxe:Bxe_C1195"/>
<dbReference type="eggNOG" id="ENOG50331BZ">
    <property type="taxonomic scope" value="Bacteria"/>
</dbReference>
<dbReference type="OrthoDB" id="7005201at2"/>
<dbReference type="Proteomes" id="UP000001817">
    <property type="component" value="Chromosome 3"/>
</dbReference>
<dbReference type="InterPro" id="IPR009310">
    <property type="entry name" value="BphX"/>
</dbReference>
<dbReference type="Pfam" id="PF06139">
    <property type="entry name" value="BphX"/>
    <property type="match status" value="1"/>
</dbReference>
<organism>
    <name type="scientific">Paraburkholderia xenovorans (strain LB400)</name>
    <dbReference type="NCBI Taxonomy" id="266265"/>
    <lineage>
        <taxon>Bacteria</taxon>
        <taxon>Pseudomonadati</taxon>
        <taxon>Pseudomonadota</taxon>
        <taxon>Betaproteobacteria</taxon>
        <taxon>Burkholderiales</taxon>
        <taxon>Burkholderiaceae</taxon>
        <taxon>Paraburkholderia</taxon>
    </lineage>
</organism>
<gene>
    <name type="ordered locus">Bxeno_C1129</name>
    <name type="ORF">Bxe_C1195</name>
</gene>
<accession>P0C1T3</accession>
<accession>P37336</accession>
<accession>Q13FT2</accession>